<accession>Q5LIR8</accession>
<evidence type="ECO:0000255" key="1">
    <source>
        <dbReference type="HAMAP-Rule" id="MF_01825"/>
    </source>
</evidence>
<organism>
    <name type="scientific">Bacteroides fragilis (strain ATCC 25285 / DSM 2151 / CCUG 4856 / JCM 11019 / LMG 10263 / NCTC 9343 / Onslow / VPI 2553 / EN-2)</name>
    <dbReference type="NCBI Taxonomy" id="272559"/>
    <lineage>
        <taxon>Bacteria</taxon>
        <taxon>Pseudomonadati</taxon>
        <taxon>Bacteroidota</taxon>
        <taxon>Bacteroidia</taxon>
        <taxon>Bacteroidales</taxon>
        <taxon>Bacteroidaceae</taxon>
        <taxon>Bacteroides</taxon>
    </lineage>
</organism>
<feature type="chain" id="PRO_0000297434" description="Erythronate-4-phosphate dehydrogenase">
    <location>
        <begin position="1"/>
        <end position="348"/>
    </location>
</feature>
<feature type="active site" evidence="1">
    <location>
        <position position="209"/>
    </location>
</feature>
<feature type="active site" evidence="1">
    <location>
        <position position="238"/>
    </location>
</feature>
<feature type="active site" description="Proton donor" evidence="1">
    <location>
        <position position="255"/>
    </location>
</feature>
<feature type="binding site" evidence="1">
    <location>
        <position position="46"/>
    </location>
    <ligand>
        <name>substrate</name>
    </ligand>
</feature>
<feature type="binding site" evidence="1">
    <location>
        <position position="67"/>
    </location>
    <ligand>
        <name>substrate</name>
    </ligand>
</feature>
<feature type="binding site" evidence="1">
    <location>
        <position position="147"/>
    </location>
    <ligand>
        <name>NAD(+)</name>
        <dbReference type="ChEBI" id="CHEBI:57540"/>
    </ligand>
</feature>
<feature type="binding site" evidence="1">
    <location>
        <position position="233"/>
    </location>
    <ligand>
        <name>NAD(+)</name>
        <dbReference type="ChEBI" id="CHEBI:57540"/>
    </ligand>
</feature>
<feature type="binding site" evidence="1">
    <location>
        <position position="258"/>
    </location>
    <ligand>
        <name>NAD(+)</name>
        <dbReference type="ChEBI" id="CHEBI:57540"/>
    </ligand>
</feature>
<feature type="binding site" evidence="1">
    <location>
        <position position="259"/>
    </location>
    <ligand>
        <name>substrate</name>
    </ligand>
</feature>
<dbReference type="EC" id="1.1.1.290" evidence="1"/>
<dbReference type="EMBL" id="CR626927">
    <property type="protein sequence ID" value="CAH05958.1"/>
    <property type="molecule type" value="Genomic_DNA"/>
</dbReference>
<dbReference type="RefSeq" id="WP_010991931.1">
    <property type="nucleotide sequence ID" value="NZ_UFTH01000001.1"/>
</dbReference>
<dbReference type="SMR" id="Q5LIR8"/>
<dbReference type="PaxDb" id="272559-BF9343_0179"/>
<dbReference type="GeneID" id="60368075"/>
<dbReference type="KEGG" id="bfs:BF9343_0179"/>
<dbReference type="eggNOG" id="COG0111">
    <property type="taxonomic scope" value="Bacteria"/>
</dbReference>
<dbReference type="HOGENOM" id="CLU_019796_4_0_10"/>
<dbReference type="UniPathway" id="UPA00244">
    <property type="reaction ID" value="UER00310"/>
</dbReference>
<dbReference type="Proteomes" id="UP000006731">
    <property type="component" value="Chromosome"/>
</dbReference>
<dbReference type="GO" id="GO:0005829">
    <property type="term" value="C:cytosol"/>
    <property type="evidence" value="ECO:0007669"/>
    <property type="project" value="TreeGrafter"/>
</dbReference>
<dbReference type="GO" id="GO:0033711">
    <property type="term" value="F:4-phosphoerythronate dehydrogenase activity"/>
    <property type="evidence" value="ECO:0007669"/>
    <property type="project" value="UniProtKB-EC"/>
</dbReference>
<dbReference type="GO" id="GO:0030267">
    <property type="term" value="F:glyoxylate reductase (NADPH) activity"/>
    <property type="evidence" value="ECO:0007669"/>
    <property type="project" value="TreeGrafter"/>
</dbReference>
<dbReference type="GO" id="GO:0016618">
    <property type="term" value="F:hydroxypyruvate reductase [NAD(P)H] activity"/>
    <property type="evidence" value="ECO:0007669"/>
    <property type="project" value="TreeGrafter"/>
</dbReference>
<dbReference type="GO" id="GO:0051287">
    <property type="term" value="F:NAD binding"/>
    <property type="evidence" value="ECO:0007669"/>
    <property type="project" value="InterPro"/>
</dbReference>
<dbReference type="GO" id="GO:0046983">
    <property type="term" value="F:protein dimerization activity"/>
    <property type="evidence" value="ECO:0007669"/>
    <property type="project" value="InterPro"/>
</dbReference>
<dbReference type="GO" id="GO:0008615">
    <property type="term" value="P:pyridoxine biosynthetic process"/>
    <property type="evidence" value="ECO:0007669"/>
    <property type="project" value="UniProtKB-UniRule"/>
</dbReference>
<dbReference type="CDD" id="cd12158">
    <property type="entry name" value="ErythrP_dh"/>
    <property type="match status" value="1"/>
</dbReference>
<dbReference type="Gene3D" id="3.30.1370.170">
    <property type="match status" value="1"/>
</dbReference>
<dbReference type="Gene3D" id="3.40.50.720">
    <property type="entry name" value="NAD(P)-binding Rossmann-like Domain"/>
    <property type="match status" value="2"/>
</dbReference>
<dbReference type="HAMAP" id="MF_01825">
    <property type="entry name" value="PdxB"/>
    <property type="match status" value="1"/>
</dbReference>
<dbReference type="InterPro" id="IPR050223">
    <property type="entry name" value="D-isomer_2-hydroxyacid_DH"/>
</dbReference>
<dbReference type="InterPro" id="IPR006139">
    <property type="entry name" value="D-isomer_2_OHA_DH_cat_dom"/>
</dbReference>
<dbReference type="InterPro" id="IPR029753">
    <property type="entry name" value="D-isomer_DH_CS"/>
</dbReference>
<dbReference type="InterPro" id="IPR006140">
    <property type="entry name" value="D-isomer_DH_NAD-bd"/>
</dbReference>
<dbReference type="InterPro" id="IPR020921">
    <property type="entry name" value="Erythronate-4-P_DHase"/>
</dbReference>
<dbReference type="InterPro" id="IPR024531">
    <property type="entry name" value="Erythronate-4-P_DHase_dimer"/>
</dbReference>
<dbReference type="InterPro" id="IPR036291">
    <property type="entry name" value="NAD(P)-bd_dom_sf"/>
</dbReference>
<dbReference type="InterPro" id="IPR038251">
    <property type="entry name" value="PdxB_dimer_sf"/>
</dbReference>
<dbReference type="NCBIfam" id="NF001309">
    <property type="entry name" value="PRK00257.1"/>
    <property type="match status" value="1"/>
</dbReference>
<dbReference type="PANTHER" id="PTHR10996">
    <property type="entry name" value="2-HYDROXYACID DEHYDROGENASE-RELATED"/>
    <property type="match status" value="1"/>
</dbReference>
<dbReference type="PANTHER" id="PTHR10996:SF283">
    <property type="entry name" value="GLYOXYLATE_HYDROXYPYRUVATE REDUCTASE B"/>
    <property type="match status" value="1"/>
</dbReference>
<dbReference type="Pfam" id="PF00389">
    <property type="entry name" value="2-Hacid_dh"/>
    <property type="match status" value="1"/>
</dbReference>
<dbReference type="Pfam" id="PF02826">
    <property type="entry name" value="2-Hacid_dh_C"/>
    <property type="match status" value="1"/>
</dbReference>
<dbReference type="Pfam" id="PF11890">
    <property type="entry name" value="DUF3410"/>
    <property type="match status" value="1"/>
</dbReference>
<dbReference type="SUPFAM" id="SSF52283">
    <property type="entry name" value="Formate/glycerate dehydrogenase catalytic domain-like"/>
    <property type="match status" value="1"/>
</dbReference>
<dbReference type="SUPFAM" id="SSF51735">
    <property type="entry name" value="NAD(P)-binding Rossmann-fold domains"/>
    <property type="match status" value="1"/>
</dbReference>
<dbReference type="PROSITE" id="PS00671">
    <property type="entry name" value="D_2_HYDROXYACID_DH_3"/>
    <property type="match status" value="1"/>
</dbReference>
<gene>
    <name evidence="1" type="primary">pdxB</name>
    <name type="ordered locus">BF0181</name>
</gene>
<comment type="function">
    <text evidence="1">Catalyzes the oxidation of erythronate-4-phosphate to 3-hydroxy-2-oxo-4-phosphonooxybutanoate.</text>
</comment>
<comment type="catalytic activity">
    <reaction evidence="1">
        <text>4-phospho-D-erythronate + NAD(+) = (R)-3-hydroxy-2-oxo-4-phosphooxybutanoate + NADH + H(+)</text>
        <dbReference type="Rhea" id="RHEA:18829"/>
        <dbReference type="ChEBI" id="CHEBI:15378"/>
        <dbReference type="ChEBI" id="CHEBI:57540"/>
        <dbReference type="ChEBI" id="CHEBI:57945"/>
        <dbReference type="ChEBI" id="CHEBI:58538"/>
        <dbReference type="ChEBI" id="CHEBI:58766"/>
        <dbReference type="EC" id="1.1.1.290"/>
    </reaction>
</comment>
<comment type="pathway">
    <text evidence="1">Cofactor biosynthesis; pyridoxine 5'-phosphate biosynthesis; pyridoxine 5'-phosphate from D-erythrose 4-phosphate: step 2/5.</text>
</comment>
<comment type="subunit">
    <text evidence="1">Homodimer.</text>
</comment>
<comment type="subcellular location">
    <subcellularLocation>
        <location evidence="1">Cytoplasm</location>
    </subcellularLocation>
</comment>
<comment type="similarity">
    <text evidence="1">Belongs to the D-isomer specific 2-hydroxyacid dehydrogenase family. PdxB subfamily.</text>
</comment>
<reference key="1">
    <citation type="journal article" date="2005" name="Science">
        <title>Extensive DNA inversions in the B. fragilis genome control variable gene expression.</title>
        <authorList>
            <person name="Cerdeno-Tarraga A.-M."/>
            <person name="Patrick S."/>
            <person name="Crossman L.C."/>
            <person name="Blakely G."/>
            <person name="Abratt V."/>
            <person name="Lennard N."/>
            <person name="Poxton I."/>
            <person name="Duerden B."/>
            <person name="Harris B."/>
            <person name="Quail M.A."/>
            <person name="Barron A."/>
            <person name="Clark L."/>
            <person name="Corton C."/>
            <person name="Doggett J."/>
            <person name="Holden M.T.G."/>
            <person name="Larke N."/>
            <person name="Line A."/>
            <person name="Lord A."/>
            <person name="Norbertczak H."/>
            <person name="Ormond D."/>
            <person name="Price C."/>
            <person name="Rabbinowitsch E."/>
            <person name="Woodward J."/>
            <person name="Barrell B.G."/>
            <person name="Parkhill J."/>
        </authorList>
    </citation>
    <scope>NUCLEOTIDE SEQUENCE [LARGE SCALE GENOMIC DNA]</scope>
    <source>
        <strain>ATCC 25285 / DSM 2151 / CCUG 4856 / JCM 11019 / LMG 10263 / NCTC 9343 / Onslow / VPI 2553 / EN-2</strain>
    </source>
</reference>
<name>PDXB_BACFN</name>
<proteinExistence type="inferred from homology"/>
<keyword id="KW-0963">Cytoplasm</keyword>
<keyword id="KW-0520">NAD</keyword>
<keyword id="KW-0560">Oxidoreductase</keyword>
<keyword id="KW-0664">Pyridoxine biosynthesis</keyword>
<protein>
    <recommendedName>
        <fullName evidence="1">Erythronate-4-phosphate dehydrogenase</fullName>
        <ecNumber evidence="1">1.1.1.290</ecNumber>
    </recommendedName>
</protein>
<sequence length="348" mass="38999">MKVIVDNKIPYIREAIEQIADEVIYVPGKDFTPELVQDADALIIRTRTRCDRSLLAGSKVKFIATATIGFDHIDTAYCREAGITWTNAPGCNSASVAQYIQSALFILQQTRGMKLNQMTIGIVGVGNVGSKVADVARKLGIQVMLNDLPREEREESTMFASLKSIAEKCDIITFHVPLYKEGKYKTYHLADKHFFHSLKKGAVIMNTSRGEVIETEALLEALRSGILSDAVIDVWEHEPDIDLELLEKVIIGTPHIAGYSADGKANATRMSLEALCRFFRIETDYRITPPEPKNKLISTATYEEASLMIYDPRRDSDALKSHPGLFEQLRGDYPLRREEGAYRIVITK</sequence>